<feature type="chain" id="PRO_1000024887" description="Ribonuclease PH">
    <location>
        <begin position="1"/>
        <end position="237"/>
    </location>
</feature>
<feature type="binding site" evidence="1">
    <location>
        <position position="86"/>
    </location>
    <ligand>
        <name>phosphate</name>
        <dbReference type="ChEBI" id="CHEBI:43474"/>
        <note>substrate</note>
    </ligand>
</feature>
<feature type="binding site" evidence="1">
    <location>
        <begin position="124"/>
        <end position="126"/>
    </location>
    <ligand>
        <name>phosphate</name>
        <dbReference type="ChEBI" id="CHEBI:43474"/>
        <note>substrate</note>
    </ligand>
</feature>
<dbReference type="EC" id="2.7.7.56" evidence="1"/>
<dbReference type="EMBL" id="CP000444">
    <property type="protein sequence ID" value="ABI41355.1"/>
    <property type="molecule type" value="Genomic_DNA"/>
</dbReference>
<dbReference type="SMR" id="Q0HZV0"/>
<dbReference type="KEGG" id="shm:Shewmr7_0352"/>
<dbReference type="HOGENOM" id="CLU_050858_0_0_6"/>
<dbReference type="GO" id="GO:0000175">
    <property type="term" value="F:3'-5'-RNA exonuclease activity"/>
    <property type="evidence" value="ECO:0007669"/>
    <property type="project" value="UniProtKB-UniRule"/>
</dbReference>
<dbReference type="GO" id="GO:0000049">
    <property type="term" value="F:tRNA binding"/>
    <property type="evidence" value="ECO:0007669"/>
    <property type="project" value="UniProtKB-UniRule"/>
</dbReference>
<dbReference type="GO" id="GO:0009022">
    <property type="term" value="F:tRNA nucleotidyltransferase activity"/>
    <property type="evidence" value="ECO:0007669"/>
    <property type="project" value="UniProtKB-UniRule"/>
</dbReference>
<dbReference type="GO" id="GO:0016075">
    <property type="term" value="P:rRNA catabolic process"/>
    <property type="evidence" value="ECO:0007669"/>
    <property type="project" value="UniProtKB-UniRule"/>
</dbReference>
<dbReference type="GO" id="GO:0006364">
    <property type="term" value="P:rRNA processing"/>
    <property type="evidence" value="ECO:0007669"/>
    <property type="project" value="UniProtKB-KW"/>
</dbReference>
<dbReference type="GO" id="GO:0008033">
    <property type="term" value="P:tRNA processing"/>
    <property type="evidence" value="ECO:0007669"/>
    <property type="project" value="UniProtKB-UniRule"/>
</dbReference>
<dbReference type="CDD" id="cd11362">
    <property type="entry name" value="RNase_PH_bact"/>
    <property type="match status" value="1"/>
</dbReference>
<dbReference type="FunFam" id="3.30.230.70:FF:000003">
    <property type="entry name" value="Ribonuclease PH"/>
    <property type="match status" value="1"/>
</dbReference>
<dbReference type="Gene3D" id="3.30.230.70">
    <property type="entry name" value="GHMP Kinase, N-terminal domain"/>
    <property type="match status" value="1"/>
</dbReference>
<dbReference type="HAMAP" id="MF_00564">
    <property type="entry name" value="RNase_PH"/>
    <property type="match status" value="1"/>
</dbReference>
<dbReference type="InterPro" id="IPR001247">
    <property type="entry name" value="ExoRNase_PH_dom1"/>
</dbReference>
<dbReference type="InterPro" id="IPR015847">
    <property type="entry name" value="ExoRNase_PH_dom2"/>
</dbReference>
<dbReference type="InterPro" id="IPR036345">
    <property type="entry name" value="ExoRNase_PH_dom2_sf"/>
</dbReference>
<dbReference type="InterPro" id="IPR027408">
    <property type="entry name" value="PNPase/RNase_PH_dom_sf"/>
</dbReference>
<dbReference type="InterPro" id="IPR020568">
    <property type="entry name" value="Ribosomal_Su5_D2-typ_SF"/>
</dbReference>
<dbReference type="InterPro" id="IPR050080">
    <property type="entry name" value="RNase_PH"/>
</dbReference>
<dbReference type="InterPro" id="IPR002381">
    <property type="entry name" value="RNase_PH_bac-type"/>
</dbReference>
<dbReference type="InterPro" id="IPR018336">
    <property type="entry name" value="RNase_PH_CS"/>
</dbReference>
<dbReference type="NCBIfam" id="TIGR01966">
    <property type="entry name" value="RNasePH"/>
    <property type="match status" value="1"/>
</dbReference>
<dbReference type="PANTHER" id="PTHR11953">
    <property type="entry name" value="EXOSOME COMPLEX COMPONENT"/>
    <property type="match status" value="1"/>
</dbReference>
<dbReference type="PANTHER" id="PTHR11953:SF0">
    <property type="entry name" value="EXOSOME COMPLEX COMPONENT RRP41"/>
    <property type="match status" value="1"/>
</dbReference>
<dbReference type="Pfam" id="PF01138">
    <property type="entry name" value="RNase_PH"/>
    <property type="match status" value="1"/>
</dbReference>
<dbReference type="Pfam" id="PF03725">
    <property type="entry name" value="RNase_PH_C"/>
    <property type="match status" value="1"/>
</dbReference>
<dbReference type="SUPFAM" id="SSF55666">
    <property type="entry name" value="Ribonuclease PH domain 2-like"/>
    <property type="match status" value="1"/>
</dbReference>
<dbReference type="SUPFAM" id="SSF54211">
    <property type="entry name" value="Ribosomal protein S5 domain 2-like"/>
    <property type="match status" value="1"/>
</dbReference>
<dbReference type="PROSITE" id="PS01277">
    <property type="entry name" value="RIBONUCLEASE_PH"/>
    <property type="match status" value="1"/>
</dbReference>
<proteinExistence type="inferred from homology"/>
<keyword id="KW-0548">Nucleotidyltransferase</keyword>
<keyword id="KW-0694">RNA-binding</keyword>
<keyword id="KW-0698">rRNA processing</keyword>
<keyword id="KW-0808">Transferase</keyword>
<keyword id="KW-0819">tRNA processing</keyword>
<keyword id="KW-0820">tRNA-binding</keyword>
<accession>Q0HZV0</accession>
<comment type="function">
    <text evidence="1">Phosphorolytic 3'-5' exoribonuclease that plays an important role in tRNA 3'-end maturation. Removes nucleotide residues following the 3'-CCA terminus of tRNAs; can also add nucleotides to the ends of RNA molecules by using nucleoside diphosphates as substrates, but this may not be physiologically important. Probably plays a role in initiation of 16S rRNA degradation (leading to ribosome degradation) during starvation.</text>
</comment>
<comment type="catalytic activity">
    <reaction evidence="1">
        <text>tRNA(n+1) + phosphate = tRNA(n) + a ribonucleoside 5'-diphosphate</text>
        <dbReference type="Rhea" id="RHEA:10628"/>
        <dbReference type="Rhea" id="RHEA-COMP:17343"/>
        <dbReference type="Rhea" id="RHEA-COMP:17344"/>
        <dbReference type="ChEBI" id="CHEBI:43474"/>
        <dbReference type="ChEBI" id="CHEBI:57930"/>
        <dbReference type="ChEBI" id="CHEBI:173114"/>
        <dbReference type="EC" id="2.7.7.56"/>
    </reaction>
</comment>
<comment type="subunit">
    <text evidence="1">Homohexameric ring arranged as a trimer of dimers.</text>
</comment>
<comment type="similarity">
    <text evidence="1">Belongs to the RNase PH family.</text>
</comment>
<name>RNPH_SHESR</name>
<sequence length="237" mass="25606">MRPSNRTPAQTRPITITRQFTAHAEGSVLVEFGETKVLCTASFTEGVPRFLKGQGQGWVTAEYGMLPRSTHSRMDREAARGKQSGRTQEIQRLIGRALRACVDMKALGENTIVIDCDVIQADGGTRTASITGACVALVDALNWARGKGIIKSNPLKFLIAAVSVGIYNGEAISDLEYVEDSAAETDMNVVMTETGKIIEIQGTAEGEPFSHEELIELLGLAKNSIREIVDVQKAALN</sequence>
<reference key="1">
    <citation type="submission" date="2006-08" db="EMBL/GenBank/DDBJ databases">
        <title>Complete sequence of chromosome 1 of Shewanella sp. MR-7.</title>
        <authorList>
            <person name="Copeland A."/>
            <person name="Lucas S."/>
            <person name="Lapidus A."/>
            <person name="Barry K."/>
            <person name="Detter J.C."/>
            <person name="Glavina del Rio T."/>
            <person name="Hammon N."/>
            <person name="Israni S."/>
            <person name="Dalin E."/>
            <person name="Tice H."/>
            <person name="Pitluck S."/>
            <person name="Kiss H."/>
            <person name="Brettin T."/>
            <person name="Bruce D."/>
            <person name="Han C."/>
            <person name="Tapia R."/>
            <person name="Gilna P."/>
            <person name="Schmutz J."/>
            <person name="Larimer F."/>
            <person name="Land M."/>
            <person name="Hauser L."/>
            <person name="Kyrpides N."/>
            <person name="Mikhailova N."/>
            <person name="Nealson K."/>
            <person name="Konstantinidis K."/>
            <person name="Klappenbach J."/>
            <person name="Tiedje J."/>
            <person name="Richardson P."/>
        </authorList>
    </citation>
    <scope>NUCLEOTIDE SEQUENCE [LARGE SCALE GENOMIC DNA]</scope>
    <source>
        <strain>MR-7</strain>
    </source>
</reference>
<gene>
    <name evidence="1" type="primary">rph</name>
    <name type="ordered locus">Shewmr7_0352</name>
</gene>
<protein>
    <recommendedName>
        <fullName evidence="1">Ribonuclease PH</fullName>
        <shortName evidence="1">RNase PH</shortName>
        <ecNumber evidence="1">2.7.7.56</ecNumber>
    </recommendedName>
    <alternativeName>
        <fullName evidence="1">tRNA nucleotidyltransferase</fullName>
    </alternativeName>
</protein>
<evidence type="ECO:0000255" key="1">
    <source>
        <dbReference type="HAMAP-Rule" id="MF_00564"/>
    </source>
</evidence>
<organism>
    <name type="scientific">Shewanella sp. (strain MR-7)</name>
    <dbReference type="NCBI Taxonomy" id="60481"/>
    <lineage>
        <taxon>Bacteria</taxon>
        <taxon>Pseudomonadati</taxon>
        <taxon>Pseudomonadota</taxon>
        <taxon>Gammaproteobacteria</taxon>
        <taxon>Alteromonadales</taxon>
        <taxon>Shewanellaceae</taxon>
        <taxon>Shewanella</taxon>
    </lineage>
</organism>